<name>RS8_FRATW</name>
<comment type="function">
    <text evidence="1">One of the primary rRNA binding proteins, it binds directly to 16S rRNA central domain where it helps coordinate assembly of the platform of the 30S subunit.</text>
</comment>
<comment type="subunit">
    <text evidence="1">Part of the 30S ribosomal subunit. Contacts proteins S5 and S12.</text>
</comment>
<comment type="similarity">
    <text evidence="1">Belongs to the universal ribosomal protein uS8 family.</text>
</comment>
<protein>
    <recommendedName>
        <fullName evidence="1">Small ribosomal subunit protein uS8</fullName>
    </recommendedName>
    <alternativeName>
        <fullName evidence="2">30S ribosomal protein S8</fullName>
    </alternativeName>
</protein>
<sequence length="132" mass="14397">MSMQDPIADMFTRIRNGLSAEKEFVSVPFSKIKMEIANFLVNEGYIKSCSKGTTSMGHPSIEVELKYHAGAPVIEMIKRVSRPSLRIYKSHADLPKVYGGYGVAIVSTSKGLVSDRKARDLGVGGEIIGYVA</sequence>
<reference key="1">
    <citation type="journal article" date="2007" name="PLoS ONE">
        <title>Complete genomic characterization of a pathogenic A.II strain of Francisella tularensis subspecies tularensis.</title>
        <authorList>
            <person name="Beckstrom-Sternberg S.M."/>
            <person name="Auerbach R.K."/>
            <person name="Godbole S."/>
            <person name="Pearson J.V."/>
            <person name="Beckstrom-Sternberg J.S."/>
            <person name="Deng Z."/>
            <person name="Munk C."/>
            <person name="Kubota K."/>
            <person name="Zhou Y."/>
            <person name="Bruce D."/>
            <person name="Noronha J."/>
            <person name="Scheuermann R.H."/>
            <person name="Wang A."/>
            <person name="Wei X."/>
            <person name="Wang J."/>
            <person name="Hao J."/>
            <person name="Wagner D.M."/>
            <person name="Brettin T.S."/>
            <person name="Brown N."/>
            <person name="Gilna P."/>
            <person name="Keim P.S."/>
        </authorList>
    </citation>
    <scope>NUCLEOTIDE SEQUENCE [LARGE SCALE GENOMIC DNA]</scope>
    <source>
        <strain>WY96-3418</strain>
    </source>
</reference>
<accession>A4IZS0</accession>
<feature type="chain" id="PRO_0000290842" description="Small ribosomal subunit protein uS8">
    <location>
        <begin position="1"/>
        <end position="132"/>
    </location>
</feature>
<evidence type="ECO:0000255" key="1">
    <source>
        <dbReference type="HAMAP-Rule" id="MF_01302"/>
    </source>
</evidence>
<evidence type="ECO:0000305" key="2"/>
<keyword id="KW-0687">Ribonucleoprotein</keyword>
<keyword id="KW-0689">Ribosomal protein</keyword>
<keyword id="KW-0694">RNA-binding</keyword>
<keyword id="KW-0699">rRNA-binding</keyword>
<dbReference type="EMBL" id="CP000608">
    <property type="protein sequence ID" value="ABO47420.1"/>
    <property type="molecule type" value="Genomic_DNA"/>
</dbReference>
<dbReference type="RefSeq" id="WP_003017806.1">
    <property type="nucleotide sequence ID" value="NC_009257.1"/>
</dbReference>
<dbReference type="SMR" id="A4IZS0"/>
<dbReference type="KEGG" id="ftw:FTW_1744"/>
<dbReference type="HOGENOM" id="CLU_098428_0_0_6"/>
<dbReference type="GO" id="GO:1990904">
    <property type="term" value="C:ribonucleoprotein complex"/>
    <property type="evidence" value="ECO:0007669"/>
    <property type="project" value="UniProtKB-KW"/>
</dbReference>
<dbReference type="GO" id="GO:0005840">
    <property type="term" value="C:ribosome"/>
    <property type="evidence" value="ECO:0007669"/>
    <property type="project" value="UniProtKB-KW"/>
</dbReference>
<dbReference type="GO" id="GO:0019843">
    <property type="term" value="F:rRNA binding"/>
    <property type="evidence" value="ECO:0007669"/>
    <property type="project" value="UniProtKB-UniRule"/>
</dbReference>
<dbReference type="GO" id="GO:0003735">
    <property type="term" value="F:structural constituent of ribosome"/>
    <property type="evidence" value="ECO:0007669"/>
    <property type="project" value="InterPro"/>
</dbReference>
<dbReference type="GO" id="GO:0006412">
    <property type="term" value="P:translation"/>
    <property type="evidence" value="ECO:0007669"/>
    <property type="project" value="UniProtKB-UniRule"/>
</dbReference>
<dbReference type="FunFam" id="3.30.1490.10:FF:000001">
    <property type="entry name" value="30S ribosomal protein S8"/>
    <property type="match status" value="1"/>
</dbReference>
<dbReference type="Gene3D" id="3.30.1370.30">
    <property type="match status" value="1"/>
</dbReference>
<dbReference type="Gene3D" id="3.30.1490.10">
    <property type="match status" value="1"/>
</dbReference>
<dbReference type="HAMAP" id="MF_01302_B">
    <property type="entry name" value="Ribosomal_uS8_B"/>
    <property type="match status" value="1"/>
</dbReference>
<dbReference type="InterPro" id="IPR000630">
    <property type="entry name" value="Ribosomal_uS8"/>
</dbReference>
<dbReference type="InterPro" id="IPR047863">
    <property type="entry name" value="Ribosomal_uS8_CS"/>
</dbReference>
<dbReference type="InterPro" id="IPR035987">
    <property type="entry name" value="Ribosomal_uS8_sf"/>
</dbReference>
<dbReference type="NCBIfam" id="NF001109">
    <property type="entry name" value="PRK00136.1"/>
    <property type="match status" value="1"/>
</dbReference>
<dbReference type="PANTHER" id="PTHR11758">
    <property type="entry name" value="40S RIBOSOMAL PROTEIN S15A"/>
    <property type="match status" value="1"/>
</dbReference>
<dbReference type="Pfam" id="PF00410">
    <property type="entry name" value="Ribosomal_S8"/>
    <property type="match status" value="1"/>
</dbReference>
<dbReference type="SUPFAM" id="SSF56047">
    <property type="entry name" value="Ribosomal protein S8"/>
    <property type="match status" value="1"/>
</dbReference>
<dbReference type="PROSITE" id="PS00053">
    <property type="entry name" value="RIBOSOMAL_S8"/>
    <property type="match status" value="1"/>
</dbReference>
<organism>
    <name type="scientific">Francisella tularensis subsp. tularensis (strain WY96-3418)</name>
    <dbReference type="NCBI Taxonomy" id="418136"/>
    <lineage>
        <taxon>Bacteria</taxon>
        <taxon>Pseudomonadati</taxon>
        <taxon>Pseudomonadota</taxon>
        <taxon>Gammaproteobacteria</taxon>
        <taxon>Thiotrichales</taxon>
        <taxon>Francisellaceae</taxon>
        <taxon>Francisella</taxon>
    </lineage>
</organism>
<proteinExistence type="inferred from homology"/>
<gene>
    <name evidence="1" type="primary">rpsH</name>
    <name type="ordered locus">FTW_1744</name>
</gene>